<evidence type="ECO:0000255" key="1">
    <source>
        <dbReference type="HAMAP-Rule" id="MF_00157"/>
    </source>
</evidence>
<name>RNT_PSEAB</name>
<organism>
    <name type="scientific">Pseudomonas aeruginosa (strain UCBPP-PA14)</name>
    <dbReference type="NCBI Taxonomy" id="208963"/>
    <lineage>
        <taxon>Bacteria</taxon>
        <taxon>Pseudomonadati</taxon>
        <taxon>Pseudomonadota</taxon>
        <taxon>Gammaproteobacteria</taxon>
        <taxon>Pseudomonadales</taxon>
        <taxon>Pseudomonadaceae</taxon>
        <taxon>Pseudomonas</taxon>
    </lineage>
</organism>
<protein>
    <recommendedName>
        <fullName evidence="1">Ribonuclease T</fullName>
        <ecNumber evidence="1">3.1.13.-</ecNumber>
    </recommendedName>
    <alternativeName>
        <fullName evidence="1">Exoribonuclease T</fullName>
        <shortName evidence="1">RNase T</shortName>
    </alternativeName>
</protein>
<keyword id="KW-0269">Exonuclease</keyword>
<keyword id="KW-0378">Hydrolase</keyword>
<keyword id="KW-0460">Magnesium</keyword>
<keyword id="KW-0479">Metal-binding</keyword>
<keyword id="KW-0540">Nuclease</keyword>
<keyword id="KW-0819">tRNA processing</keyword>
<proteinExistence type="inferred from homology"/>
<gene>
    <name evidence="1" type="primary">rnt</name>
    <name type="ordered locus">PA14_18700</name>
</gene>
<reference key="1">
    <citation type="journal article" date="2006" name="Genome Biol.">
        <title>Genomic analysis reveals that Pseudomonas aeruginosa virulence is combinatorial.</title>
        <authorList>
            <person name="Lee D.G."/>
            <person name="Urbach J.M."/>
            <person name="Wu G."/>
            <person name="Liberati N.T."/>
            <person name="Feinbaum R.L."/>
            <person name="Miyata S."/>
            <person name="Diggins L.T."/>
            <person name="He J."/>
            <person name="Saucier M."/>
            <person name="Deziel E."/>
            <person name="Friedman L."/>
            <person name="Li L."/>
            <person name="Grills G."/>
            <person name="Montgomery K."/>
            <person name="Kucherlapati R."/>
            <person name="Rahme L.G."/>
            <person name="Ausubel F.M."/>
        </authorList>
    </citation>
    <scope>NUCLEOTIDE SEQUENCE [LARGE SCALE GENOMIC DNA]</scope>
    <source>
        <strain>UCBPP-PA14</strain>
    </source>
</reference>
<comment type="function">
    <text evidence="1">Trims short 3' overhangs of a variety of RNA species, leaving a one or two nucleotide 3' overhang. Responsible for the end-turnover of tRNA: specifically removes the terminal AMP residue from uncharged tRNA (tRNA-C-C-A). Also appears to be involved in tRNA biosynthesis.</text>
</comment>
<comment type="cofactor">
    <cofactor evidence="1">
        <name>Mg(2+)</name>
        <dbReference type="ChEBI" id="CHEBI:18420"/>
    </cofactor>
    <text evidence="1">Binds two Mg(2+) per subunit. The active form of the enzyme binds two Mg(2+) ions in its active site. The first Mg(2+) forms only one salt bridge with the protein.</text>
</comment>
<comment type="subunit">
    <text evidence="1">Homodimer.</text>
</comment>
<comment type="similarity">
    <text evidence="1">Belongs to the RNase T family.</text>
</comment>
<sequence>MSEDNFDDEFDGSLPSGPRHPMARRFRGYLPVVVDVETGGFNSATDALLEIAATTVGMDEKGFLFPEHTYFFRIEPFEGANIEPAALEFTGIKLDHPLRMAVQEEAALTEIFRGIRKALKANGCKRAILVGHNSSFDLGFLNAAVARTGIKRNPFHPFSSFDTATLAGLAYGQTVLAKACQAAGMEFDNREAHSARYDTEKTAELFCGIVNRWKEMGGWMDDDD</sequence>
<feature type="chain" id="PRO_1000011404" description="Ribonuclease T">
    <location>
        <begin position="1"/>
        <end position="224"/>
    </location>
</feature>
<feature type="domain" description="Exonuclease" evidence="1">
    <location>
        <begin position="32"/>
        <end position="206"/>
    </location>
</feature>
<feature type="active site" description="Proton donor/acceptor" evidence="1">
    <location>
        <position position="193"/>
    </location>
</feature>
<feature type="binding site" evidence="1">
    <location>
        <position position="35"/>
    </location>
    <ligand>
        <name>Mg(2+)</name>
        <dbReference type="ChEBI" id="CHEBI:18420"/>
        <label>1</label>
        <note>catalytic</note>
    </ligand>
</feature>
<feature type="binding site" evidence="1">
    <location>
        <position position="35"/>
    </location>
    <ligand>
        <name>Mg(2+)</name>
        <dbReference type="ChEBI" id="CHEBI:18420"/>
        <label>2</label>
        <note>catalytic</note>
    </ligand>
</feature>
<feature type="binding site" evidence="1">
    <location>
        <position position="37"/>
    </location>
    <ligand>
        <name>Mg(2+)</name>
        <dbReference type="ChEBI" id="CHEBI:18420"/>
        <label>2</label>
        <note>catalytic</note>
    </ligand>
</feature>
<feature type="binding site" evidence="1">
    <location>
        <position position="193"/>
    </location>
    <ligand>
        <name>Mg(2+)</name>
        <dbReference type="ChEBI" id="CHEBI:18420"/>
        <label>2</label>
        <note>catalytic</note>
    </ligand>
</feature>
<feature type="binding site" evidence="1">
    <location>
        <position position="198"/>
    </location>
    <ligand>
        <name>Mg(2+)</name>
        <dbReference type="ChEBI" id="CHEBI:18420"/>
        <label>2</label>
        <note>catalytic</note>
    </ligand>
</feature>
<feature type="site" description="Important for substrate binding and specificity" evidence="1">
    <location>
        <position position="41"/>
    </location>
</feature>
<feature type="site" description="Important for substrate binding and specificity" evidence="1">
    <location>
        <position position="89"/>
    </location>
</feature>
<feature type="site" description="Important for substrate binding and specificity" evidence="1">
    <location>
        <position position="136"/>
    </location>
</feature>
<feature type="site" description="Important for substrate binding and specificity" evidence="1">
    <location>
        <position position="158"/>
    </location>
</feature>
<accession>Q02QZ9</accession>
<dbReference type="EC" id="3.1.13.-" evidence="1"/>
<dbReference type="EMBL" id="CP000438">
    <property type="protein sequence ID" value="ABJ12763.1"/>
    <property type="molecule type" value="Genomic_DNA"/>
</dbReference>
<dbReference type="RefSeq" id="WP_003092070.1">
    <property type="nucleotide sequence ID" value="NZ_CP034244.1"/>
</dbReference>
<dbReference type="SMR" id="Q02QZ9"/>
<dbReference type="KEGG" id="pau:PA14_18700"/>
<dbReference type="PseudoCAP" id="PA14_18700"/>
<dbReference type="HOGENOM" id="CLU_082724_0_0_6"/>
<dbReference type="BioCyc" id="PAER208963:G1G74-1541-MONOMER"/>
<dbReference type="Proteomes" id="UP000000653">
    <property type="component" value="Chromosome"/>
</dbReference>
<dbReference type="GO" id="GO:0005829">
    <property type="term" value="C:cytosol"/>
    <property type="evidence" value="ECO:0007669"/>
    <property type="project" value="TreeGrafter"/>
</dbReference>
<dbReference type="GO" id="GO:0008408">
    <property type="term" value="F:3'-5' exonuclease activity"/>
    <property type="evidence" value="ECO:0007669"/>
    <property type="project" value="TreeGrafter"/>
</dbReference>
<dbReference type="GO" id="GO:0000287">
    <property type="term" value="F:magnesium ion binding"/>
    <property type="evidence" value="ECO:0007669"/>
    <property type="project" value="UniProtKB-UniRule"/>
</dbReference>
<dbReference type="GO" id="GO:0003676">
    <property type="term" value="F:nucleic acid binding"/>
    <property type="evidence" value="ECO:0007669"/>
    <property type="project" value="InterPro"/>
</dbReference>
<dbReference type="GO" id="GO:0016896">
    <property type="term" value="F:RNA exonuclease activity, producing 5'-phosphomonoesters"/>
    <property type="evidence" value="ECO:0007669"/>
    <property type="project" value="UniProtKB-UniRule"/>
</dbReference>
<dbReference type="GO" id="GO:0045004">
    <property type="term" value="P:DNA replication proofreading"/>
    <property type="evidence" value="ECO:0007669"/>
    <property type="project" value="TreeGrafter"/>
</dbReference>
<dbReference type="GO" id="GO:0008033">
    <property type="term" value="P:tRNA processing"/>
    <property type="evidence" value="ECO:0007669"/>
    <property type="project" value="UniProtKB-KW"/>
</dbReference>
<dbReference type="CDD" id="cd06134">
    <property type="entry name" value="RNaseT"/>
    <property type="match status" value="1"/>
</dbReference>
<dbReference type="FunFam" id="3.30.420.10:FF:000009">
    <property type="entry name" value="Ribonuclease T"/>
    <property type="match status" value="1"/>
</dbReference>
<dbReference type="Gene3D" id="3.30.420.10">
    <property type="entry name" value="Ribonuclease H-like superfamily/Ribonuclease H"/>
    <property type="match status" value="1"/>
</dbReference>
<dbReference type="HAMAP" id="MF_00157">
    <property type="entry name" value="RNase_T"/>
    <property type="match status" value="1"/>
</dbReference>
<dbReference type="InterPro" id="IPR013520">
    <property type="entry name" value="Exonuclease_RNaseT/DNA_pol3"/>
</dbReference>
<dbReference type="InterPro" id="IPR005987">
    <property type="entry name" value="RNase_T"/>
</dbReference>
<dbReference type="InterPro" id="IPR012337">
    <property type="entry name" value="RNaseH-like_sf"/>
</dbReference>
<dbReference type="InterPro" id="IPR036397">
    <property type="entry name" value="RNaseH_sf"/>
</dbReference>
<dbReference type="NCBIfam" id="TIGR01298">
    <property type="entry name" value="RNaseT"/>
    <property type="match status" value="1"/>
</dbReference>
<dbReference type="PANTHER" id="PTHR30231">
    <property type="entry name" value="DNA POLYMERASE III SUBUNIT EPSILON"/>
    <property type="match status" value="1"/>
</dbReference>
<dbReference type="PANTHER" id="PTHR30231:SF2">
    <property type="entry name" value="RIBONUCLEASE T"/>
    <property type="match status" value="1"/>
</dbReference>
<dbReference type="Pfam" id="PF00929">
    <property type="entry name" value="RNase_T"/>
    <property type="match status" value="1"/>
</dbReference>
<dbReference type="SMART" id="SM00479">
    <property type="entry name" value="EXOIII"/>
    <property type="match status" value="1"/>
</dbReference>
<dbReference type="SUPFAM" id="SSF53098">
    <property type="entry name" value="Ribonuclease H-like"/>
    <property type="match status" value="1"/>
</dbReference>